<dbReference type="EMBL" id="CP000013">
    <property type="protein sequence ID" value="AAU07035.1"/>
    <property type="molecule type" value="Genomic_DNA"/>
</dbReference>
<dbReference type="RefSeq" id="WP_011193526.1">
    <property type="nucleotide sequence ID" value="NZ_CP028872.1"/>
</dbReference>
<dbReference type="SMR" id="Q662I6"/>
<dbReference type="GeneID" id="45160970"/>
<dbReference type="KEGG" id="bga:BG0177"/>
<dbReference type="eggNOG" id="COG0445">
    <property type="taxonomic scope" value="Bacteria"/>
</dbReference>
<dbReference type="HOGENOM" id="CLU_007831_2_2_12"/>
<dbReference type="OrthoDB" id="9815560at2"/>
<dbReference type="Proteomes" id="UP000002276">
    <property type="component" value="Chromosome"/>
</dbReference>
<dbReference type="GO" id="GO:0005829">
    <property type="term" value="C:cytosol"/>
    <property type="evidence" value="ECO:0007669"/>
    <property type="project" value="TreeGrafter"/>
</dbReference>
<dbReference type="GO" id="GO:0050660">
    <property type="term" value="F:flavin adenine dinucleotide binding"/>
    <property type="evidence" value="ECO:0007669"/>
    <property type="project" value="UniProtKB-UniRule"/>
</dbReference>
<dbReference type="GO" id="GO:0030488">
    <property type="term" value="P:tRNA methylation"/>
    <property type="evidence" value="ECO:0007669"/>
    <property type="project" value="TreeGrafter"/>
</dbReference>
<dbReference type="GO" id="GO:0002098">
    <property type="term" value="P:tRNA wobble uridine modification"/>
    <property type="evidence" value="ECO:0007669"/>
    <property type="project" value="InterPro"/>
</dbReference>
<dbReference type="FunFam" id="1.10.150.570:FF:000001">
    <property type="entry name" value="tRNA uridine 5-carboxymethylaminomethyl modification enzyme MnmG"/>
    <property type="match status" value="1"/>
</dbReference>
<dbReference type="FunFam" id="3.50.50.60:FF:000002">
    <property type="entry name" value="tRNA uridine 5-carboxymethylaminomethyl modification enzyme MnmG"/>
    <property type="match status" value="1"/>
</dbReference>
<dbReference type="Gene3D" id="3.50.50.60">
    <property type="entry name" value="FAD/NAD(P)-binding domain"/>
    <property type="match status" value="2"/>
</dbReference>
<dbReference type="Gene3D" id="1.10.150.570">
    <property type="entry name" value="GidA associated domain, C-terminal subdomain"/>
    <property type="match status" value="1"/>
</dbReference>
<dbReference type="Gene3D" id="1.10.10.1800">
    <property type="entry name" value="tRNA uridine 5-carboxymethylaminomethyl modification enzyme MnmG/GidA"/>
    <property type="match status" value="1"/>
</dbReference>
<dbReference type="HAMAP" id="MF_00129">
    <property type="entry name" value="MnmG_GidA"/>
    <property type="match status" value="1"/>
</dbReference>
<dbReference type="InterPro" id="IPR036188">
    <property type="entry name" value="FAD/NAD-bd_sf"/>
</dbReference>
<dbReference type="InterPro" id="IPR049312">
    <property type="entry name" value="GIDA_C_N"/>
</dbReference>
<dbReference type="InterPro" id="IPR004416">
    <property type="entry name" value="MnmG"/>
</dbReference>
<dbReference type="InterPro" id="IPR002218">
    <property type="entry name" value="MnmG-rel"/>
</dbReference>
<dbReference type="InterPro" id="IPR020595">
    <property type="entry name" value="MnmG-rel_CS"/>
</dbReference>
<dbReference type="InterPro" id="IPR026904">
    <property type="entry name" value="MnmG_C"/>
</dbReference>
<dbReference type="InterPro" id="IPR047001">
    <property type="entry name" value="MnmG_C_subdom"/>
</dbReference>
<dbReference type="InterPro" id="IPR044920">
    <property type="entry name" value="MnmG_C_subdom_sf"/>
</dbReference>
<dbReference type="InterPro" id="IPR040131">
    <property type="entry name" value="MnmG_N"/>
</dbReference>
<dbReference type="NCBIfam" id="TIGR00136">
    <property type="entry name" value="mnmG_gidA"/>
    <property type="match status" value="1"/>
</dbReference>
<dbReference type="PANTHER" id="PTHR11806">
    <property type="entry name" value="GLUCOSE INHIBITED DIVISION PROTEIN A"/>
    <property type="match status" value="1"/>
</dbReference>
<dbReference type="PANTHER" id="PTHR11806:SF0">
    <property type="entry name" value="PROTEIN MTO1 HOMOLOG, MITOCHONDRIAL"/>
    <property type="match status" value="1"/>
</dbReference>
<dbReference type="Pfam" id="PF01134">
    <property type="entry name" value="GIDA"/>
    <property type="match status" value="1"/>
</dbReference>
<dbReference type="Pfam" id="PF21680">
    <property type="entry name" value="GIDA_C_1st"/>
    <property type="match status" value="1"/>
</dbReference>
<dbReference type="Pfam" id="PF13932">
    <property type="entry name" value="SAM_GIDA_C"/>
    <property type="match status" value="1"/>
</dbReference>
<dbReference type="SMART" id="SM01228">
    <property type="entry name" value="GIDA_assoc_3"/>
    <property type="match status" value="1"/>
</dbReference>
<dbReference type="SUPFAM" id="SSF51905">
    <property type="entry name" value="FAD/NAD(P)-binding domain"/>
    <property type="match status" value="1"/>
</dbReference>
<dbReference type="PROSITE" id="PS01280">
    <property type="entry name" value="GIDA_1"/>
    <property type="match status" value="1"/>
</dbReference>
<dbReference type="PROSITE" id="PS01281">
    <property type="entry name" value="GIDA_2"/>
    <property type="match status" value="1"/>
</dbReference>
<proteinExistence type="inferred from homology"/>
<gene>
    <name evidence="1" type="primary">mnmG</name>
    <name evidence="1" type="synonym">gidA</name>
    <name type="ordered locus">BG0177</name>
</gene>
<comment type="function">
    <text evidence="1">NAD-binding protein involved in the addition of a carboxymethylaminomethyl (cmnm) group at the wobble position (U34) of certain tRNAs, forming tRNA-cmnm(5)s(2)U34.</text>
</comment>
<comment type="cofactor">
    <cofactor evidence="1">
        <name>FAD</name>
        <dbReference type="ChEBI" id="CHEBI:57692"/>
    </cofactor>
</comment>
<comment type="subunit">
    <text evidence="1">Homodimer. Heterotetramer of two MnmE and two MnmG subunits.</text>
</comment>
<comment type="subcellular location">
    <subcellularLocation>
        <location evidence="1">Cytoplasm</location>
    </subcellularLocation>
</comment>
<comment type="similarity">
    <text evidence="1">Belongs to the MnmG family.</text>
</comment>
<organism>
    <name type="scientific">Borrelia garinii subsp. bavariensis (strain ATCC BAA-2496 / DSM 23469 / PBi)</name>
    <name type="common">Borreliella bavariensis</name>
    <dbReference type="NCBI Taxonomy" id="290434"/>
    <lineage>
        <taxon>Bacteria</taxon>
        <taxon>Pseudomonadati</taxon>
        <taxon>Spirochaetota</taxon>
        <taxon>Spirochaetia</taxon>
        <taxon>Spirochaetales</taxon>
        <taxon>Borreliaceae</taxon>
        <taxon>Borreliella</taxon>
    </lineage>
</organism>
<feature type="chain" id="PRO_0000117067" description="tRNA uridine 5-carboxymethylaminomethyl modification enzyme MnmG">
    <location>
        <begin position="1"/>
        <end position="621"/>
    </location>
</feature>
<feature type="binding site" evidence="1">
    <location>
        <begin position="9"/>
        <end position="14"/>
    </location>
    <ligand>
        <name>FAD</name>
        <dbReference type="ChEBI" id="CHEBI:57692"/>
    </ligand>
</feature>
<feature type="binding site" evidence="1">
    <location>
        <begin position="270"/>
        <end position="284"/>
    </location>
    <ligand>
        <name>NAD(+)</name>
        <dbReference type="ChEBI" id="CHEBI:57540"/>
    </ligand>
</feature>
<keyword id="KW-0963">Cytoplasm</keyword>
<keyword id="KW-0274">FAD</keyword>
<keyword id="KW-0285">Flavoprotein</keyword>
<keyword id="KW-0520">NAD</keyword>
<keyword id="KW-0819">tRNA processing</keyword>
<evidence type="ECO:0000255" key="1">
    <source>
        <dbReference type="HAMAP-Rule" id="MF_00129"/>
    </source>
</evidence>
<protein>
    <recommendedName>
        <fullName evidence="1">tRNA uridine 5-carboxymethylaminomethyl modification enzyme MnmG</fullName>
    </recommendedName>
    <alternativeName>
        <fullName evidence="1">Glucose-inhibited division protein A</fullName>
    </alternativeName>
</protein>
<name>MNMG_BORGP</name>
<reference key="1">
    <citation type="journal article" date="2004" name="Nucleic Acids Res.">
        <title>Comparative analysis of the Borrelia garinii genome.</title>
        <authorList>
            <person name="Gloeckner G."/>
            <person name="Lehmann R."/>
            <person name="Romualdi A."/>
            <person name="Pradella S."/>
            <person name="Schulte-Spechtel U."/>
            <person name="Schilhabel M."/>
            <person name="Wilske B."/>
            <person name="Suehnel J."/>
            <person name="Platzer M."/>
        </authorList>
    </citation>
    <scope>NUCLEOTIDE SEQUENCE [LARGE SCALE GENOMIC DNA]</scope>
    <source>
        <strain>ATCC BAA-2496 / DSM 23469 / PBi</strain>
    </source>
</reference>
<accession>Q662I6</accession>
<sequence>MDFDAIVIGGGHAGIEAALALSRLDFKTLMITQNLDTIGKLSCNPAIGGLAKGNMVREIDALGGEMGRIIDFSMIQFRVLNKSRGPAVQAPRAQADKLMYQTKAKETLERQDNLDLFQDTVVDFLLNSMRNEIKGVVTERGNKFRSNVVVLTTGTFLRGKIFIGEYRANMGRLAEFSAYGLDKTLLSLGFEMGRLKTGTPARIHKKSVDFSKTEVQFGDSDIIPFSFSNGNLDKSQLSCYVTYTNKRTHEIISENMHLSPLYSGEIVGNGPRYCPSIEDKIVKFKDKDRHQIFIEPEGFNTEEMYLNGLSSSLPENIQQKFINSIEGLEHAIITRPGYAVEYDYINPIELYPNLESKRVKGLFVAGQTNGSSGYEEAAAQGLMAGINAALRLQNKKPMILTRTSSYIGVLIDDLVTKGTKEPYRMFTSRAEHRLNLRHDTSDKRLIKIGYDLGLVDEERYSKYLFKKRRVEEIKELLKQRRLSLKDVADEQLKKHVSKDFYHILKDPSISLDNLIKIDPSLSDSKVILEQVELDVKYEGYINRQKDLIKKLNNLELVKLPFDFNYEIIEGLSREAREKFSKVQPATLAQASRIPGIRNTDITVLFIYFSNPKNKVVLNFSL</sequence>